<reference key="1">
    <citation type="submission" date="2006-03" db="EMBL/GenBank/DDBJ databases">
        <title>Complete sequence of chromosome of Psychrobacter cryohalolentis K5.</title>
        <authorList>
            <consortium name="US DOE Joint Genome Institute"/>
            <person name="Copeland A."/>
            <person name="Lucas S."/>
            <person name="Lapidus A."/>
            <person name="Barry K."/>
            <person name="Detter J.C."/>
            <person name="Glavina T."/>
            <person name="Hammon N."/>
            <person name="Israni S."/>
            <person name="Dalin E."/>
            <person name="Tice H."/>
            <person name="Pitluck S."/>
            <person name="Brettin T."/>
            <person name="Bruce D."/>
            <person name="Han C."/>
            <person name="Tapia R."/>
            <person name="Sims D.R."/>
            <person name="Gilna P."/>
            <person name="Schmutz J."/>
            <person name="Larimer F."/>
            <person name="Land M."/>
            <person name="Hauser L."/>
            <person name="Kyrpides N."/>
            <person name="Kim E."/>
            <person name="Richardson P."/>
        </authorList>
    </citation>
    <scope>NUCLEOTIDE SEQUENCE [LARGE SCALE GENOMIC DNA]</scope>
    <source>
        <strain>ATCC BAA-1226 / DSM 17306 / VKM B-2378 / K5</strain>
    </source>
</reference>
<evidence type="ECO:0000255" key="1">
    <source>
        <dbReference type="HAMAP-Rule" id="MF_01320"/>
    </source>
</evidence>
<evidence type="ECO:0000256" key="2">
    <source>
        <dbReference type="SAM" id="MobiDB-lite"/>
    </source>
</evidence>
<evidence type="ECO:0000305" key="3"/>
<feature type="chain" id="PRO_0000309990" description="Large ribosomal subunit protein uL2">
    <location>
        <begin position="1"/>
        <end position="275"/>
    </location>
</feature>
<feature type="region of interest" description="Disordered" evidence="2">
    <location>
        <begin position="222"/>
        <end position="275"/>
    </location>
</feature>
<feature type="compositionally biased region" description="Basic and acidic residues" evidence="2">
    <location>
        <begin position="229"/>
        <end position="239"/>
    </location>
</feature>
<keyword id="KW-0687">Ribonucleoprotein</keyword>
<keyword id="KW-0689">Ribosomal protein</keyword>
<keyword id="KW-0694">RNA-binding</keyword>
<keyword id="KW-0699">rRNA-binding</keyword>
<name>RL2_PSYCK</name>
<proteinExistence type="inferred from homology"/>
<organism>
    <name type="scientific">Psychrobacter cryohalolentis (strain ATCC BAA-1226 / DSM 17306 / VKM B-2378 / K5)</name>
    <dbReference type="NCBI Taxonomy" id="335284"/>
    <lineage>
        <taxon>Bacteria</taxon>
        <taxon>Pseudomonadati</taxon>
        <taxon>Pseudomonadota</taxon>
        <taxon>Gammaproteobacteria</taxon>
        <taxon>Moraxellales</taxon>
        <taxon>Moraxellaceae</taxon>
        <taxon>Psychrobacter</taxon>
    </lineage>
</organism>
<accession>Q1QDI3</accession>
<gene>
    <name evidence="1" type="primary">rplB</name>
    <name type="ordered locus">Pcryo_0487</name>
</gene>
<sequence length="275" mass="30449">MPIVRAKPTSPGRRFVEKVVHPHLYKGRPFAALLESKSKTGGRNNNGRITTRHIGGGHKQHYRIIDFKRTKDNIPATVERIEYDPNRTAHIALLKYADGERRYIIAAKKQAVGDTVMSGELSPIRPGNCLPLKNIPLGTVIHNIELKIGKGAQMARAAGASVQLLGRDGIYAILRLRSGETRRVHVNCRAVIGEVSNTENNLKSLGKAGASRWRGIRPSVRGVAMNPVDHPHGGGEGRNKGRHPTSPWGQKSKGLKTRHNKRTDNMIIRRRAKKK</sequence>
<protein>
    <recommendedName>
        <fullName evidence="1">Large ribosomal subunit protein uL2</fullName>
    </recommendedName>
    <alternativeName>
        <fullName evidence="3">50S ribosomal protein L2</fullName>
    </alternativeName>
</protein>
<comment type="function">
    <text evidence="1">One of the primary rRNA binding proteins. Required for association of the 30S and 50S subunits to form the 70S ribosome, for tRNA binding and peptide bond formation. It has been suggested to have peptidyltransferase activity; this is somewhat controversial. Makes several contacts with the 16S rRNA in the 70S ribosome.</text>
</comment>
<comment type="subunit">
    <text evidence="1">Part of the 50S ribosomal subunit. Forms a bridge to the 30S subunit in the 70S ribosome.</text>
</comment>
<comment type="similarity">
    <text evidence="1">Belongs to the universal ribosomal protein uL2 family.</text>
</comment>
<dbReference type="EMBL" id="CP000323">
    <property type="protein sequence ID" value="ABE74270.1"/>
    <property type="molecule type" value="Genomic_DNA"/>
</dbReference>
<dbReference type="RefSeq" id="WP_011512853.1">
    <property type="nucleotide sequence ID" value="NC_007969.1"/>
</dbReference>
<dbReference type="SMR" id="Q1QDI3"/>
<dbReference type="STRING" id="335284.Pcryo_0487"/>
<dbReference type="KEGG" id="pcr:Pcryo_0487"/>
<dbReference type="eggNOG" id="COG0090">
    <property type="taxonomic scope" value="Bacteria"/>
</dbReference>
<dbReference type="HOGENOM" id="CLU_036235_2_1_6"/>
<dbReference type="Proteomes" id="UP000002425">
    <property type="component" value="Chromosome"/>
</dbReference>
<dbReference type="GO" id="GO:0015934">
    <property type="term" value="C:large ribosomal subunit"/>
    <property type="evidence" value="ECO:0007669"/>
    <property type="project" value="InterPro"/>
</dbReference>
<dbReference type="GO" id="GO:0019843">
    <property type="term" value="F:rRNA binding"/>
    <property type="evidence" value="ECO:0007669"/>
    <property type="project" value="UniProtKB-UniRule"/>
</dbReference>
<dbReference type="GO" id="GO:0003735">
    <property type="term" value="F:structural constituent of ribosome"/>
    <property type="evidence" value="ECO:0007669"/>
    <property type="project" value="InterPro"/>
</dbReference>
<dbReference type="GO" id="GO:0016740">
    <property type="term" value="F:transferase activity"/>
    <property type="evidence" value="ECO:0007669"/>
    <property type="project" value="InterPro"/>
</dbReference>
<dbReference type="GO" id="GO:0002181">
    <property type="term" value="P:cytoplasmic translation"/>
    <property type="evidence" value="ECO:0007669"/>
    <property type="project" value="TreeGrafter"/>
</dbReference>
<dbReference type="FunFam" id="2.30.30.30:FF:000001">
    <property type="entry name" value="50S ribosomal protein L2"/>
    <property type="match status" value="1"/>
</dbReference>
<dbReference type="FunFam" id="2.40.50.140:FF:000003">
    <property type="entry name" value="50S ribosomal protein L2"/>
    <property type="match status" value="1"/>
</dbReference>
<dbReference type="FunFam" id="4.10.950.10:FF:000001">
    <property type="entry name" value="50S ribosomal protein L2"/>
    <property type="match status" value="1"/>
</dbReference>
<dbReference type="Gene3D" id="2.30.30.30">
    <property type="match status" value="1"/>
</dbReference>
<dbReference type="Gene3D" id="2.40.50.140">
    <property type="entry name" value="Nucleic acid-binding proteins"/>
    <property type="match status" value="1"/>
</dbReference>
<dbReference type="Gene3D" id="4.10.950.10">
    <property type="entry name" value="Ribosomal protein L2, domain 3"/>
    <property type="match status" value="1"/>
</dbReference>
<dbReference type="HAMAP" id="MF_01320_B">
    <property type="entry name" value="Ribosomal_uL2_B"/>
    <property type="match status" value="1"/>
</dbReference>
<dbReference type="InterPro" id="IPR012340">
    <property type="entry name" value="NA-bd_OB-fold"/>
</dbReference>
<dbReference type="InterPro" id="IPR014722">
    <property type="entry name" value="Rib_uL2_dom2"/>
</dbReference>
<dbReference type="InterPro" id="IPR002171">
    <property type="entry name" value="Ribosomal_uL2"/>
</dbReference>
<dbReference type="InterPro" id="IPR005880">
    <property type="entry name" value="Ribosomal_uL2_bac/org-type"/>
</dbReference>
<dbReference type="InterPro" id="IPR022669">
    <property type="entry name" value="Ribosomal_uL2_C"/>
</dbReference>
<dbReference type="InterPro" id="IPR022671">
    <property type="entry name" value="Ribosomal_uL2_CS"/>
</dbReference>
<dbReference type="InterPro" id="IPR014726">
    <property type="entry name" value="Ribosomal_uL2_dom3"/>
</dbReference>
<dbReference type="InterPro" id="IPR022666">
    <property type="entry name" value="Ribosomal_uL2_RNA-bd_dom"/>
</dbReference>
<dbReference type="InterPro" id="IPR008991">
    <property type="entry name" value="Translation_prot_SH3-like_sf"/>
</dbReference>
<dbReference type="NCBIfam" id="TIGR01171">
    <property type="entry name" value="rplB_bact"/>
    <property type="match status" value="1"/>
</dbReference>
<dbReference type="PANTHER" id="PTHR13691:SF5">
    <property type="entry name" value="LARGE RIBOSOMAL SUBUNIT PROTEIN UL2M"/>
    <property type="match status" value="1"/>
</dbReference>
<dbReference type="PANTHER" id="PTHR13691">
    <property type="entry name" value="RIBOSOMAL PROTEIN L2"/>
    <property type="match status" value="1"/>
</dbReference>
<dbReference type="Pfam" id="PF00181">
    <property type="entry name" value="Ribosomal_L2"/>
    <property type="match status" value="1"/>
</dbReference>
<dbReference type="Pfam" id="PF03947">
    <property type="entry name" value="Ribosomal_L2_C"/>
    <property type="match status" value="1"/>
</dbReference>
<dbReference type="PIRSF" id="PIRSF002158">
    <property type="entry name" value="Ribosomal_L2"/>
    <property type="match status" value="1"/>
</dbReference>
<dbReference type="SMART" id="SM01383">
    <property type="entry name" value="Ribosomal_L2"/>
    <property type="match status" value="1"/>
</dbReference>
<dbReference type="SMART" id="SM01382">
    <property type="entry name" value="Ribosomal_L2_C"/>
    <property type="match status" value="1"/>
</dbReference>
<dbReference type="SUPFAM" id="SSF50249">
    <property type="entry name" value="Nucleic acid-binding proteins"/>
    <property type="match status" value="1"/>
</dbReference>
<dbReference type="SUPFAM" id="SSF50104">
    <property type="entry name" value="Translation proteins SH3-like domain"/>
    <property type="match status" value="1"/>
</dbReference>
<dbReference type="PROSITE" id="PS00467">
    <property type="entry name" value="RIBOSOMAL_L2"/>
    <property type="match status" value="1"/>
</dbReference>